<gene>
    <name evidence="1" type="primary">betA</name>
    <name type="ordered locus">PFL_5768</name>
</gene>
<reference key="1">
    <citation type="journal article" date="2005" name="Nat. Biotechnol.">
        <title>Complete genome sequence of the plant commensal Pseudomonas fluorescens Pf-5.</title>
        <authorList>
            <person name="Paulsen I.T."/>
            <person name="Press C.M."/>
            <person name="Ravel J."/>
            <person name="Kobayashi D.Y."/>
            <person name="Myers G.S.A."/>
            <person name="Mavrodi D.V."/>
            <person name="DeBoy R.T."/>
            <person name="Seshadri R."/>
            <person name="Ren Q."/>
            <person name="Madupu R."/>
            <person name="Dodson R.J."/>
            <person name="Durkin A.S."/>
            <person name="Brinkac L.M."/>
            <person name="Daugherty S.C."/>
            <person name="Sullivan S.A."/>
            <person name="Rosovitz M.J."/>
            <person name="Gwinn M.L."/>
            <person name="Zhou L."/>
            <person name="Schneider D.J."/>
            <person name="Cartinhour S.W."/>
            <person name="Nelson W.C."/>
            <person name="Weidman J."/>
            <person name="Watkins K."/>
            <person name="Tran K."/>
            <person name="Khouri H."/>
            <person name="Pierson E.A."/>
            <person name="Pierson L.S. III"/>
            <person name="Thomashow L.S."/>
            <person name="Loper J.E."/>
        </authorList>
    </citation>
    <scope>NUCLEOTIDE SEQUENCE [LARGE SCALE GENOMIC DNA]</scope>
    <source>
        <strain>ATCC BAA-477 / NRRL B-23932 / Pf-5</strain>
    </source>
</reference>
<protein>
    <recommendedName>
        <fullName evidence="1">Oxygen-dependent choline dehydrogenase</fullName>
        <shortName evidence="1">CDH</shortName>
        <shortName evidence="1">CHD</shortName>
        <ecNumber evidence="1">1.1.99.1</ecNumber>
    </recommendedName>
    <alternativeName>
        <fullName evidence="1">Betaine aldehyde dehydrogenase</fullName>
        <shortName evidence="1">BADH</shortName>
        <ecNumber evidence="1">1.2.1.8</ecNumber>
    </alternativeName>
</protein>
<comment type="function">
    <text evidence="1">Involved in the biosynthesis of the osmoprotectant glycine betaine. Catalyzes the oxidation of choline to betaine aldehyde and betaine aldehyde to glycine betaine at the same rate.</text>
</comment>
<comment type="catalytic activity">
    <reaction evidence="1">
        <text>choline + A = betaine aldehyde + AH2</text>
        <dbReference type="Rhea" id="RHEA:17433"/>
        <dbReference type="ChEBI" id="CHEBI:13193"/>
        <dbReference type="ChEBI" id="CHEBI:15354"/>
        <dbReference type="ChEBI" id="CHEBI:15710"/>
        <dbReference type="ChEBI" id="CHEBI:17499"/>
        <dbReference type="EC" id="1.1.99.1"/>
    </reaction>
</comment>
<comment type="catalytic activity">
    <reaction evidence="1">
        <text>betaine aldehyde + NAD(+) + H2O = glycine betaine + NADH + 2 H(+)</text>
        <dbReference type="Rhea" id="RHEA:15305"/>
        <dbReference type="ChEBI" id="CHEBI:15377"/>
        <dbReference type="ChEBI" id="CHEBI:15378"/>
        <dbReference type="ChEBI" id="CHEBI:15710"/>
        <dbReference type="ChEBI" id="CHEBI:17750"/>
        <dbReference type="ChEBI" id="CHEBI:57540"/>
        <dbReference type="ChEBI" id="CHEBI:57945"/>
        <dbReference type="EC" id="1.2.1.8"/>
    </reaction>
</comment>
<comment type="cofactor">
    <cofactor evidence="1">
        <name>FAD</name>
        <dbReference type="ChEBI" id="CHEBI:57692"/>
    </cofactor>
</comment>
<comment type="pathway">
    <text evidence="1">Amine and polyamine biosynthesis; betaine biosynthesis via choline pathway; betaine aldehyde from choline (cytochrome c reductase route): step 1/1.</text>
</comment>
<comment type="similarity">
    <text evidence="1">Belongs to the GMC oxidoreductase family.</text>
</comment>
<proteinExistence type="inferred from homology"/>
<dbReference type="EC" id="1.1.99.1" evidence="1"/>
<dbReference type="EC" id="1.2.1.8" evidence="1"/>
<dbReference type="EMBL" id="CP000076">
    <property type="protein sequence ID" value="AAY94958.1"/>
    <property type="molecule type" value="Genomic_DNA"/>
</dbReference>
<dbReference type="RefSeq" id="WP_011063943.1">
    <property type="nucleotide sequence ID" value="NC_004129.6"/>
</dbReference>
<dbReference type="SMR" id="Q4K4K7"/>
<dbReference type="STRING" id="220664.PFL_5768"/>
<dbReference type="KEGG" id="pfl:PFL_5768"/>
<dbReference type="PATRIC" id="fig|220664.5.peg.5881"/>
<dbReference type="eggNOG" id="COG2303">
    <property type="taxonomic scope" value="Bacteria"/>
</dbReference>
<dbReference type="HOGENOM" id="CLU_002865_7_1_6"/>
<dbReference type="UniPathway" id="UPA00529">
    <property type="reaction ID" value="UER00385"/>
</dbReference>
<dbReference type="Proteomes" id="UP000008540">
    <property type="component" value="Chromosome"/>
</dbReference>
<dbReference type="GO" id="GO:0016020">
    <property type="term" value="C:membrane"/>
    <property type="evidence" value="ECO:0007669"/>
    <property type="project" value="TreeGrafter"/>
</dbReference>
<dbReference type="GO" id="GO:0008802">
    <property type="term" value="F:betaine-aldehyde dehydrogenase (NAD+) activity"/>
    <property type="evidence" value="ECO:0007669"/>
    <property type="project" value="UniProtKB-EC"/>
</dbReference>
<dbReference type="GO" id="GO:0008812">
    <property type="term" value="F:choline dehydrogenase activity"/>
    <property type="evidence" value="ECO:0007669"/>
    <property type="project" value="UniProtKB-UniRule"/>
</dbReference>
<dbReference type="GO" id="GO:0050660">
    <property type="term" value="F:flavin adenine dinucleotide binding"/>
    <property type="evidence" value="ECO:0007669"/>
    <property type="project" value="InterPro"/>
</dbReference>
<dbReference type="GO" id="GO:0019285">
    <property type="term" value="P:glycine betaine biosynthetic process from choline"/>
    <property type="evidence" value="ECO:0007669"/>
    <property type="project" value="UniProtKB-UniRule"/>
</dbReference>
<dbReference type="Gene3D" id="3.50.50.60">
    <property type="entry name" value="FAD/NAD(P)-binding domain"/>
    <property type="match status" value="1"/>
</dbReference>
<dbReference type="Gene3D" id="3.30.560.10">
    <property type="entry name" value="Glucose Oxidase, domain 3"/>
    <property type="match status" value="1"/>
</dbReference>
<dbReference type="HAMAP" id="MF_00750">
    <property type="entry name" value="Choline_dehydrogen"/>
    <property type="match status" value="1"/>
</dbReference>
<dbReference type="InterPro" id="IPR011533">
    <property type="entry name" value="BetA"/>
</dbReference>
<dbReference type="InterPro" id="IPR036188">
    <property type="entry name" value="FAD/NAD-bd_sf"/>
</dbReference>
<dbReference type="InterPro" id="IPR012132">
    <property type="entry name" value="GMC_OxRdtase"/>
</dbReference>
<dbReference type="InterPro" id="IPR000172">
    <property type="entry name" value="GMC_OxRdtase_N"/>
</dbReference>
<dbReference type="InterPro" id="IPR007867">
    <property type="entry name" value="GMC_OxRtase_C"/>
</dbReference>
<dbReference type="NCBIfam" id="TIGR01810">
    <property type="entry name" value="betA"/>
    <property type="match status" value="1"/>
</dbReference>
<dbReference type="NCBIfam" id="NF002550">
    <property type="entry name" value="PRK02106.1"/>
    <property type="match status" value="1"/>
</dbReference>
<dbReference type="PANTHER" id="PTHR11552:SF147">
    <property type="entry name" value="CHOLINE DEHYDROGENASE, MITOCHONDRIAL"/>
    <property type="match status" value="1"/>
</dbReference>
<dbReference type="PANTHER" id="PTHR11552">
    <property type="entry name" value="GLUCOSE-METHANOL-CHOLINE GMC OXIDOREDUCTASE"/>
    <property type="match status" value="1"/>
</dbReference>
<dbReference type="Pfam" id="PF05199">
    <property type="entry name" value="GMC_oxred_C"/>
    <property type="match status" value="1"/>
</dbReference>
<dbReference type="Pfam" id="PF00732">
    <property type="entry name" value="GMC_oxred_N"/>
    <property type="match status" value="1"/>
</dbReference>
<dbReference type="PIRSF" id="PIRSF000137">
    <property type="entry name" value="Alcohol_oxidase"/>
    <property type="match status" value="1"/>
</dbReference>
<dbReference type="SUPFAM" id="SSF54373">
    <property type="entry name" value="FAD-linked reductases, C-terminal domain"/>
    <property type="match status" value="1"/>
</dbReference>
<dbReference type="SUPFAM" id="SSF51905">
    <property type="entry name" value="FAD/NAD(P)-binding domain"/>
    <property type="match status" value="1"/>
</dbReference>
<dbReference type="PROSITE" id="PS00623">
    <property type="entry name" value="GMC_OXRED_1"/>
    <property type="match status" value="1"/>
</dbReference>
<dbReference type="PROSITE" id="PS00624">
    <property type="entry name" value="GMC_OXRED_2"/>
    <property type="match status" value="1"/>
</dbReference>
<sequence>MAQEYDYIIVGAGSAGNTLATRLTEDEGVTVLLLEAGGPDYRFDFRTQMPAALAFPLQGRRYNWAYETDPEPHMNGRRMECGRGKGLGGSSLINGMCYIRGNAMDYDGWAKLPGLEDWTYLDCLPYFRKAETRDIGPNDYHGGEGPVSVTTPKAGNNPLFHAMVEAGVQAGYPRTEDLNGYQQEGFGPMDRTVTPKGRRASTARGYLDTAKKRSTLTIVTHALTDKILFEGKRAVGVSYLQGSTEERVEARARKEVIVSSGAIASPQLLQRSGVGPRALLESLDIPVVHDLPGVGENLQDHLELYLQYACTQPVSLYPSLLWWNQPAIGAEWLFNGTGIGASNQFEAGGFIRTREEFEWPNIQYHFLPVAINYNGSNGVKEHGFQAHMGSMRSPSRGRVQLKSKDPRQHPSILFNYMATEQDWQEFRDGIRLTREIMQQPALDPFRGREISPGIEVQTDEQLDKFVREHAETAFHPSCSCKMGTDDMAVVDGQGRVHGMQGLRVVDASIMPIITTGNLNAPTIMMAEKIADKIRGRQPLPRSTAAYYVAGEAPVRGKPMRDVTPAAQ</sequence>
<evidence type="ECO:0000255" key="1">
    <source>
        <dbReference type="HAMAP-Rule" id="MF_00750"/>
    </source>
</evidence>
<evidence type="ECO:0000256" key="2">
    <source>
        <dbReference type="SAM" id="MobiDB-lite"/>
    </source>
</evidence>
<organism>
    <name type="scientific">Pseudomonas fluorescens (strain ATCC BAA-477 / NRRL B-23932 / Pf-5)</name>
    <dbReference type="NCBI Taxonomy" id="220664"/>
    <lineage>
        <taxon>Bacteria</taxon>
        <taxon>Pseudomonadati</taxon>
        <taxon>Pseudomonadota</taxon>
        <taxon>Gammaproteobacteria</taxon>
        <taxon>Pseudomonadales</taxon>
        <taxon>Pseudomonadaceae</taxon>
        <taxon>Pseudomonas</taxon>
    </lineage>
</organism>
<feature type="chain" id="PRO_0000258928" description="Oxygen-dependent choline dehydrogenase">
    <location>
        <begin position="1"/>
        <end position="567"/>
    </location>
</feature>
<feature type="region of interest" description="Disordered" evidence="2">
    <location>
        <begin position="182"/>
        <end position="203"/>
    </location>
</feature>
<feature type="active site" description="Proton acceptor" evidence="1">
    <location>
        <position position="475"/>
    </location>
</feature>
<feature type="binding site" evidence="1">
    <location>
        <begin position="6"/>
        <end position="35"/>
    </location>
    <ligand>
        <name>FAD</name>
        <dbReference type="ChEBI" id="CHEBI:57692"/>
    </ligand>
</feature>
<accession>Q4K4K7</accession>
<name>BETA_PSEF5</name>
<keyword id="KW-0274">FAD</keyword>
<keyword id="KW-0285">Flavoprotein</keyword>
<keyword id="KW-0520">NAD</keyword>
<keyword id="KW-0560">Oxidoreductase</keyword>